<reference key="1">
    <citation type="journal article" date="1989" name="Plant Mol. Biol.">
        <title>Analysis of RNA2 of pea early browning virus strain SP5.</title>
        <authorList>
            <person name="Petersen S.G."/>
            <person name="Lehmbeck J."/>
            <person name="Borkhardt B."/>
        </authorList>
    </citation>
    <scope>NUCLEOTIDE SEQUENCE [GENOMIC RNA]</scope>
    <source>
        <strain>SP5</strain>
    </source>
</reference>
<reference key="2">
    <citation type="journal article" date="1990" name="Nucleic Acids Res.">
        <title>The complete nucleotide sequence of PEBV RNA2 reveals the presence of a novel open reading frame and provides insights into the structure of tobraviral subgenomic promoters.</title>
        <authorList>
            <person name="Goulden M.G."/>
            <person name="Lomonossoff G.P."/>
            <person name="Davies J.W."/>
            <person name="Wood K.R."/>
        </authorList>
    </citation>
    <scope>NUCLEOTIDE SEQUENCE [GENOMIC RNA]</scope>
    <source>
        <strain>SP5</strain>
    </source>
</reference>
<accession>P14849</accession>
<organismHost>
    <name type="scientific">Phaseolus vulgaris</name>
    <name type="common">Kidney bean</name>
    <name type="synonym">French bean</name>
    <dbReference type="NCBI Taxonomy" id="3885"/>
</organismHost>
<organismHost>
    <name type="scientific">Pisum sativum</name>
    <name type="common">Garden pea</name>
    <name type="synonym">Lathyrus oleraceus</name>
    <dbReference type="NCBI Taxonomy" id="3888"/>
</organismHost>
<comment type="subcellular location">
    <subcellularLocation>
        <location evidence="2">Virion</location>
    </subcellularLocation>
</comment>
<proteinExistence type="predicted"/>
<protein>
    <recommendedName>
        <fullName>Coat protein</fullName>
    </recommendedName>
    <alternativeName>
        <fullName>Capsid protein</fullName>
    </alternativeName>
</protein>
<keyword id="KW-0167">Capsid protein</keyword>
<keyword id="KW-1185">Reference proteome</keyword>
<keyword id="KW-0946">Virion</keyword>
<dbReference type="EMBL" id="X15883">
    <property type="protein sequence ID" value="CAA33892.1"/>
    <property type="molecule type" value="Genomic_RNA"/>
</dbReference>
<dbReference type="EMBL" id="X51828">
    <property type="protein sequence ID" value="CAA36125.1"/>
    <property type="molecule type" value="Genomic_RNA"/>
</dbReference>
<dbReference type="PIR" id="S07552">
    <property type="entry name" value="S07552"/>
</dbReference>
<dbReference type="RefSeq" id="NP_040351.1">
    <property type="nucleotide sequence ID" value="NC_001368.1"/>
</dbReference>
<dbReference type="GeneID" id="962121"/>
<dbReference type="KEGG" id="vg:962121"/>
<dbReference type="OrthoDB" id="26280at10239"/>
<dbReference type="Proteomes" id="UP000201257">
    <property type="component" value="Genome"/>
</dbReference>
<dbReference type="GO" id="GO:0019028">
    <property type="term" value="C:viral capsid"/>
    <property type="evidence" value="ECO:0007669"/>
    <property type="project" value="UniProtKB-KW"/>
</dbReference>
<dbReference type="GO" id="GO:0005198">
    <property type="term" value="F:structural molecule activity"/>
    <property type="evidence" value="ECO:0007669"/>
    <property type="project" value="InterPro"/>
</dbReference>
<dbReference type="Gene3D" id="1.20.120.70">
    <property type="entry name" value="Tobacco mosaic virus-like, coat protein"/>
    <property type="match status" value="1"/>
</dbReference>
<dbReference type="InterPro" id="IPR001337">
    <property type="entry name" value="TMV-like_coat"/>
</dbReference>
<dbReference type="InterPro" id="IPR036417">
    <property type="entry name" value="TMV-like_coat_sf"/>
</dbReference>
<dbReference type="Pfam" id="PF00721">
    <property type="entry name" value="TMV_coat"/>
    <property type="match status" value="1"/>
</dbReference>
<dbReference type="SUPFAM" id="SSF47195">
    <property type="entry name" value="TMV-like viral coat proteins"/>
    <property type="match status" value="1"/>
</dbReference>
<feature type="chain" id="PRO_0000222503" description="Coat protein">
    <location>
        <begin position="1"/>
        <end position="212"/>
    </location>
</feature>
<feature type="region of interest" description="Disordered" evidence="1">
    <location>
        <begin position="109"/>
        <end position="128"/>
    </location>
</feature>
<feature type="region of interest" description="Disordered" evidence="1">
    <location>
        <begin position="185"/>
        <end position="212"/>
    </location>
</feature>
<feature type="compositionally biased region" description="Polar residues" evidence="1">
    <location>
        <begin position="109"/>
        <end position="126"/>
    </location>
</feature>
<feature type="compositionally biased region" description="Polar residues" evidence="1">
    <location>
        <begin position="186"/>
        <end position="202"/>
    </location>
</feature>
<feature type="compositionally biased region" description="Gly residues" evidence="1">
    <location>
        <begin position="203"/>
        <end position="212"/>
    </location>
</feature>
<evidence type="ECO:0000256" key="1">
    <source>
        <dbReference type="SAM" id="MobiDB-lite"/>
    </source>
</evidence>
<evidence type="ECO:0000305" key="2"/>
<organism>
    <name type="scientific">Pea early browning virus</name>
    <dbReference type="NCBI Taxonomy" id="12294"/>
    <lineage>
        <taxon>Viruses</taxon>
        <taxon>Riboviria</taxon>
        <taxon>Orthornavirae</taxon>
        <taxon>Kitrinoviricota</taxon>
        <taxon>Alsuviricetes</taxon>
        <taxon>Martellivirales</taxon>
        <taxon>Virgaviridae</taxon>
        <taxon>Tobravirus</taxon>
    </lineage>
</organism>
<sequence>MVKGKYEGFSASGAKDLVFSAWVEVGNWNEVLRRLMDLKFALQADRDKIPGVLSDLNMESPFTRFKRFSDGEEYALLIKEANIAIAQIQAASAFKRRADEKNAVSGLLTQSAQQPTSSIQGSSQATVVRPPRESDSAFAEDNFSFGKFDDASTAFHKARSYLRGLRLVALDQEDFEEKFKLVWKETPQQQQNVTGPTVPATSSGGGKGPGVA</sequence>
<name>COAT_PEBV</name>